<accession>O93436</accession>
<reference key="1">
    <citation type="journal article" date="1998" name="J. Biol. Chem.">
        <title>EAST, an epidermal growth factor receptor- and Eps15-associated protein with Src homology 3 and tyrosine-based activation motif domains.</title>
        <authorList>
            <person name="Lohi O."/>
            <person name="Poussu A."/>
            <person name="Merilaeinen J."/>
            <person name="Kellokumpu S."/>
            <person name="Wasenius V.-M."/>
            <person name="Lehto V.P."/>
        </authorList>
    </citation>
    <scope>NUCLEOTIDE SEQUENCE [MRNA]</scope>
    <scope>TISSUE SPECIFICITY</scope>
    <scope>PHOSPHORYLATION</scope>
    <scope>INTERACTION WITH EGFR AND EPS15</scope>
    <scope>SUBCELLULAR LOCATION</scope>
</reference>
<reference key="2">
    <citation type="journal article" date="1998" name="FEBS Lett.">
        <title>EAST, a novel EGF receptor substrate, associates with focal adhesions and actin fibers.</title>
        <authorList>
            <person name="Lohi O."/>
            <person name="Lehto V.-P."/>
        </authorList>
    </citation>
    <scope>FUNCTION</scope>
    <scope>INTERACTION WITH EPS15</scope>
    <scope>SUBCELLULAR LOCATION</scope>
</reference>
<reference key="3">
    <citation type="journal article" date="1998" name="FEBS Lett.">
        <title>Src phosphorylates EAST, a novel EGF receptor-associated protein.</title>
        <authorList>
            <person name="Lohi O."/>
            <person name="Lehto V.-P."/>
        </authorList>
    </citation>
    <scope>PHOSPHORYLATION BY SRC</scope>
</reference>
<evidence type="ECO:0000250" key="1"/>
<evidence type="ECO:0000255" key="2">
    <source>
        <dbReference type="PROSITE-ProRule" id="PRU00192"/>
    </source>
</evidence>
<evidence type="ECO:0000255" key="3">
    <source>
        <dbReference type="PROSITE-ProRule" id="PRU00213"/>
    </source>
</evidence>
<evidence type="ECO:0000255" key="4">
    <source>
        <dbReference type="PROSITE-ProRule" id="PRU00218"/>
    </source>
</evidence>
<evidence type="ECO:0000256" key="5">
    <source>
        <dbReference type="SAM" id="MobiDB-lite"/>
    </source>
</evidence>
<evidence type="ECO:0000269" key="6">
    <source>
    </source>
</evidence>
<evidence type="ECO:0000269" key="7">
    <source>
    </source>
</evidence>
<evidence type="ECO:0000269" key="8">
    <source>
    </source>
</evidence>
<evidence type="ECO:0000305" key="9"/>
<gene>
    <name type="primary">STAM2</name>
    <name type="synonym">EAST</name>
</gene>
<sequence>MPLSASNPFEQDVEKATNEHNNSEDWGLIMDICDKVGSTPNGAKDCLKAIMRRVNHKVPHVALQALTLLGACVSNCGRIFHLEVCSRDFATEARGIINKAHGKVSEKLKTLMVEWSEEFQKDPQCSLISATIKSLKEEGVTFPAAGSQATTNAAKNGSSLSKNKEDEDIRKAIELSLQEQKQQQMETKSLYPSAEIQQTNQNLRKVRALYDFEAVEDNELTFKSGEIIFVLDDSDTDWWKGENHRGVGLFPSNFVTSDLNVEPEAATVDNSCVPEDATEEIKKAEPEAVYIDEDKMDKTLQVLQSIDPTDLNLDTDLLDSEVICQQMGPMIDEKLEEIDRKHSELSELNVKVLEALELYNKLMNETPMYSAYSKLHHPAQYPPTSSGVSVQSYPVQPPSGNYMIQGVHQVTVSQGYGLGPDQMGQLRSLPQNINSSDCNLYTKSNRQRMCHMKAITTWQRFSKHTSER</sequence>
<keyword id="KW-0963">Cytoplasm</keyword>
<keyword id="KW-0967">Endosome</keyword>
<keyword id="KW-0472">Membrane</keyword>
<keyword id="KW-0597">Phosphoprotein</keyword>
<keyword id="KW-0653">Protein transport</keyword>
<keyword id="KW-1185">Reference proteome</keyword>
<keyword id="KW-0728">SH3 domain</keyword>
<keyword id="KW-0813">Transport</keyword>
<proteinExistence type="evidence at protein level"/>
<organism>
    <name type="scientific">Gallus gallus</name>
    <name type="common">Chicken</name>
    <dbReference type="NCBI Taxonomy" id="9031"/>
    <lineage>
        <taxon>Eukaryota</taxon>
        <taxon>Metazoa</taxon>
        <taxon>Chordata</taxon>
        <taxon>Craniata</taxon>
        <taxon>Vertebrata</taxon>
        <taxon>Euteleostomi</taxon>
        <taxon>Archelosauria</taxon>
        <taxon>Archosauria</taxon>
        <taxon>Dinosauria</taxon>
        <taxon>Saurischia</taxon>
        <taxon>Theropoda</taxon>
        <taxon>Coelurosauria</taxon>
        <taxon>Aves</taxon>
        <taxon>Neognathae</taxon>
        <taxon>Galloanserae</taxon>
        <taxon>Galliformes</taxon>
        <taxon>Phasianidae</taxon>
        <taxon>Phasianinae</taxon>
        <taxon>Gallus</taxon>
    </lineage>
</organism>
<protein>
    <recommendedName>
        <fullName>Signal transducing adapter molecule 2</fullName>
        <shortName>STAM-2</shortName>
    </recommendedName>
    <alternativeName>
        <fullName>Epidermal growth factor receptor-associated protein with SH3 and TAM domain</fullName>
    </alternativeName>
</protein>
<comment type="function">
    <text evidence="1 8">Involved in intracellular signal transduction mediated by EGF. As a protein associated with focal adhesions and actin filaments, it may play a role in EGF receptor-stimulated cytoskeletal reorganization. The ESCRT-0 complex binds ubiquitin and acts as a sorting machinery that recognizes ubiquitinated receptors and transfers them to further sequential lysosomal sorting/trafficking processes (By similarity).</text>
</comment>
<comment type="subunit">
    <text evidence="1">Component of the ESCRT-0 complex composed of STAM2 and HGS.</text>
</comment>
<comment type="subcellular location">
    <subcellularLocation>
        <location evidence="6 8">Cytoplasm</location>
    </subcellularLocation>
    <subcellularLocation>
        <location evidence="1">Early endosome membrane</location>
        <topology evidence="1">Peripheral membrane protein</topology>
        <orientation evidence="1">Cytoplasmic side</orientation>
    </subcellularLocation>
</comment>
<comment type="tissue specificity">
    <text evidence="6">Ubiquitously expressed.</text>
</comment>
<comment type="PTM">
    <text evidence="6 7">Phosphorylated in response to EGF and PDGF. Phosphorylated by SRC.</text>
</comment>
<comment type="similarity">
    <text evidence="9">Belongs to the STAM family.</text>
</comment>
<name>STAM2_CHICK</name>
<feature type="chain" id="PRO_0000190150" description="Signal transducing adapter molecule 2">
    <location>
        <begin position="1"/>
        <end position="468"/>
    </location>
</feature>
<feature type="domain" description="VHS" evidence="4">
    <location>
        <begin position="16"/>
        <end position="143"/>
    </location>
</feature>
<feature type="domain" description="UIM" evidence="3">
    <location>
        <begin position="164"/>
        <end position="183"/>
    </location>
</feature>
<feature type="domain" description="SH3" evidence="2">
    <location>
        <begin position="201"/>
        <end position="260"/>
    </location>
</feature>
<feature type="domain" description="ITAM">
    <location>
        <begin position="358"/>
        <end position="375"/>
    </location>
</feature>
<feature type="region of interest" description="Disordered" evidence="5">
    <location>
        <begin position="1"/>
        <end position="20"/>
    </location>
</feature>
<feature type="region of interest" description="Disordered" evidence="5">
    <location>
        <begin position="146"/>
        <end position="165"/>
    </location>
</feature>
<feature type="compositionally biased region" description="Polar residues" evidence="5">
    <location>
        <begin position="147"/>
        <end position="161"/>
    </location>
</feature>
<dbReference type="EMBL" id="AJ224514">
    <property type="protein sequence ID" value="CAA12023.1"/>
    <property type="molecule type" value="mRNA"/>
</dbReference>
<dbReference type="RefSeq" id="NP_001012940.1">
    <property type="nucleotide sequence ID" value="NM_001012922.1"/>
</dbReference>
<dbReference type="SMR" id="O93436"/>
<dbReference type="FunCoup" id="O93436">
    <property type="interactions" value="1960"/>
</dbReference>
<dbReference type="STRING" id="9031.ENSGALP00000056600"/>
<dbReference type="PaxDb" id="9031-ENSGALP00000036962"/>
<dbReference type="KEGG" id="gga:424317"/>
<dbReference type="VEuPathDB" id="HostDB:geneid_424317"/>
<dbReference type="eggNOG" id="KOG2199">
    <property type="taxonomic scope" value="Eukaryota"/>
</dbReference>
<dbReference type="InParanoid" id="O93436"/>
<dbReference type="OrthoDB" id="10068368at2759"/>
<dbReference type="PhylomeDB" id="O93436"/>
<dbReference type="PRO" id="PR:O93436"/>
<dbReference type="Proteomes" id="UP000000539">
    <property type="component" value="Unassembled WGS sequence"/>
</dbReference>
<dbReference type="GO" id="GO:0031901">
    <property type="term" value="C:early endosome membrane"/>
    <property type="evidence" value="ECO:0007669"/>
    <property type="project" value="UniProtKB-SubCell"/>
</dbReference>
<dbReference type="GO" id="GO:0030139">
    <property type="term" value="C:endocytic vesicle"/>
    <property type="evidence" value="ECO:0000314"/>
    <property type="project" value="AgBase"/>
</dbReference>
<dbReference type="GO" id="GO:0035091">
    <property type="term" value="F:phosphatidylinositol binding"/>
    <property type="evidence" value="ECO:0007669"/>
    <property type="project" value="InterPro"/>
</dbReference>
<dbReference type="GO" id="GO:0017124">
    <property type="term" value="F:SH3 domain binding"/>
    <property type="evidence" value="ECO:0000314"/>
    <property type="project" value="AgBase"/>
</dbReference>
<dbReference type="GO" id="GO:0043130">
    <property type="term" value="F:ubiquitin binding"/>
    <property type="evidence" value="ECO:0007669"/>
    <property type="project" value="InterPro"/>
</dbReference>
<dbReference type="GO" id="GO:0015031">
    <property type="term" value="P:protein transport"/>
    <property type="evidence" value="ECO:0007669"/>
    <property type="project" value="UniProtKB-KW"/>
</dbReference>
<dbReference type="GO" id="GO:0007165">
    <property type="term" value="P:signal transduction"/>
    <property type="evidence" value="ECO:0000314"/>
    <property type="project" value="AgBase"/>
</dbReference>
<dbReference type="CDD" id="cd11963">
    <property type="entry name" value="SH3_STAM2"/>
    <property type="match status" value="1"/>
</dbReference>
<dbReference type="CDD" id="cd16999">
    <property type="entry name" value="VHS_STAM2"/>
    <property type="match status" value="1"/>
</dbReference>
<dbReference type="FunFam" id="1.25.40.90:FF:000009">
    <property type="entry name" value="Putative signal transducing adapter molecule 1"/>
    <property type="match status" value="1"/>
</dbReference>
<dbReference type="FunFam" id="1.20.5.1940:FF:000002">
    <property type="entry name" value="Signal transducing adapter molecule 1"/>
    <property type="match status" value="1"/>
</dbReference>
<dbReference type="FunFam" id="2.30.30.40:FF:000086">
    <property type="entry name" value="signal transducing adapter molecule 2"/>
    <property type="match status" value="1"/>
</dbReference>
<dbReference type="Gene3D" id="1.20.5.1940">
    <property type="match status" value="1"/>
</dbReference>
<dbReference type="Gene3D" id="1.25.40.90">
    <property type="match status" value="1"/>
</dbReference>
<dbReference type="Gene3D" id="2.30.30.40">
    <property type="entry name" value="SH3 Domains"/>
    <property type="match status" value="1"/>
</dbReference>
<dbReference type="InterPro" id="IPR008942">
    <property type="entry name" value="ENTH_VHS"/>
</dbReference>
<dbReference type="InterPro" id="IPR036028">
    <property type="entry name" value="SH3-like_dom_sf"/>
</dbReference>
<dbReference type="InterPro" id="IPR001452">
    <property type="entry name" value="SH3_domain"/>
</dbReference>
<dbReference type="InterPro" id="IPR050670">
    <property type="entry name" value="STAM"/>
</dbReference>
<dbReference type="InterPro" id="IPR035675">
    <property type="entry name" value="STAM2_SH3"/>
</dbReference>
<dbReference type="InterPro" id="IPR003903">
    <property type="entry name" value="UIM_dom"/>
</dbReference>
<dbReference type="InterPro" id="IPR002014">
    <property type="entry name" value="VHS_dom"/>
</dbReference>
<dbReference type="InterPro" id="IPR047493">
    <property type="entry name" value="VHS_STAM2"/>
</dbReference>
<dbReference type="PANTHER" id="PTHR45929:SF1">
    <property type="entry name" value="HEMATOPOIETIC LINEAGE CELL-SPECIFIC PROTEIN-RELATED"/>
    <property type="match status" value="1"/>
</dbReference>
<dbReference type="PANTHER" id="PTHR45929">
    <property type="entry name" value="JAK PATHWAY SIGNAL TRANSDUCTION ADAPTOR MOLECULE"/>
    <property type="match status" value="1"/>
</dbReference>
<dbReference type="Pfam" id="PF00018">
    <property type="entry name" value="SH3_1"/>
    <property type="match status" value="1"/>
</dbReference>
<dbReference type="Pfam" id="PF02809">
    <property type="entry name" value="UIM"/>
    <property type="match status" value="1"/>
</dbReference>
<dbReference type="Pfam" id="PF00790">
    <property type="entry name" value="VHS"/>
    <property type="match status" value="1"/>
</dbReference>
<dbReference type="PRINTS" id="PR00499">
    <property type="entry name" value="P67PHOX"/>
</dbReference>
<dbReference type="PRINTS" id="PR00452">
    <property type="entry name" value="SH3DOMAIN"/>
</dbReference>
<dbReference type="SMART" id="SM00326">
    <property type="entry name" value="SH3"/>
    <property type="match status" value="1"/>
</dbReference>
<dbReference type="SMART" id="SM00726">
    <property type="entry name" value="UIM"/>
    <property type="match status" value="1"/>
</dbReference>
<dbReference type="SMART" id="SM00288">
    <property type="entry name" value="VHS"/>
    <property type="match status" value="1"/>
</dbReference>
<dbReference type="SUPFAM" id="SSF48464">
    <property type="entry name" value="ENTH/VHS domain"/>
    <property type="match status" value="1"/>
</dbReference>
<dbReference type="SUPFAM" id="SSF50044">
    <property type="entry name" value="SH3-domain"/>
    <property type="match status" value="1"/>
</dbReference>
<dbReference type="PROSITE" id="PS50002">
    <property type="entry name" value="SH3"/>
    <property type="match status" value="1"/>
</dbReference>
<dbReference type="PROSITE" id="PS50330">
    <property type="entry name" value="UIM"/>
    <property type="match status" value="1"/>
</dbReference>
<dbReference type="PROSITE" id="PS50179">
    <property type="entry name" value="VHS"/>
    <property type="match status" value="1"/>
</dbReference>